<organism>
    <name type="scientific">Campylobacter fetus subsp. fetus (strain 82-40)</name>
    <dbReference type="NCBI Taxonomy" id="360106"/>
    <lineage>
        <taxon>Bacteria</taxon>
        <taxon>Pseudomonadati</taxon>
        <taxon>Campylobacterota</taxon>
        <taxon>Epsilonproteobacteria</taxon>
        <taxon>Campylobacterales</taxon>
        <taxon>Campylobacteraceae</taxon>
        <taxon>Campylobacter</taxon>
    </lineage>
</organism>
<dbReference type="EC" id="4.1.99.17" evidence="1"/>
<dbReference type="EMBL" id="CP000487">
    <property type="protein sequence ID" value="ABK82934.1"/>
    <property type="molecule type" value="Genomic_DNA"/>
</dbReference>
<dbReference type="RefSeq" id="WP_011731805.1">
    <property type="nucleotide sequence ID" value="NC_008599.1"/>
</dbReference>
<dbReference type="SMR" id="A0RN29"/>
<dbReference type="KEGG" id="cff:CFF8240_0410"/>
<dbReference type="eggNOG" id="COG0422">
    <property type="taxonomic scope" value="Bacteria"/>
</dbReference>
<dbReference type="HOGENOM" id="CLU_013181_2_2_7"/>
<dbReference type="UniPathway" id="UPA00060"/>
<dbReference type="Proteomes" id="UP000000760">
    <property type="component" value="Chromosome"/>
</dbReference>
<dbReference type="GO" id="GO:0005829">
    <property type="term" value="C:cytosol"/>
    <property type="evidence" value="ECO:0007669"/>
    <property type="project" value="TreeGrafter"/>
</dbReference>
<dbReference type="GO" id="GO:0051539">
    <property type="term" value="F:4 iron, 4 sulfur cluster binding"/>
    <property type="evidence" value="ECO:0007669"/>
    <property type="project" value="UniProtKB-KW"/>
</dbReference>
<dbReference type="GO" id="GO:0016830">
    <property type="term" value="F:carbon-carbon lyase activity"/>
    <property type="evidence" value="ECO:0007669"/>
    <property type="project" value="InterPro"/>
</dbReference>
<dbReference type="GO" id="GO:0008270">
    <property type="term" value="F:zinc ion binding"/>
    <property type="evidence" value="ECO:0007669"/>
    <property type="project" value="UniProtKB-UniRule"/>
</dbReference>
<dbReference type="GO" id="GO:0009228">
    <property type="term" value="P:thiamine biosynthetic process"/>
    <property type="evidence" value="ECO:0007669"/>
    <property type="project" value="UniProtKB-KW"/>
</dbReference>
<dbReference type="GO" id="GO:0009229">
    <property type="term" value="P:thiamine diphosphate biosynthetic process"/>
    <property type="evidence" value="ECO:0007669"/>
    <property type="project" value="UniProtKB-UniRule"/>
</dbReference>
<dbReference type="FunFam" id="3.20.20.540:FF:000001">
    <property type="entry name" value="Phosphomethylpyrimidine synthase"/>
    <property type="match status" value="1"/>
</dbReference>
<dbReference type="Gene3D" id="6.10.250.620">
    <property type="match status" value="1"/>
</dbReference>
<dbReference type="Gene3D" id="3.20.20.540">
    <property type="entry name" value="Radical SAM ThiC family, central domain"/>
    <property type="match status" value="1"/>
</dbReference>
<dbReference type="HAMAP" id="MF_00089">
    <property type="entry name" value="ThiC"/>
    <property type="match status" value="1"/>
</dbReference>
<dbReference type="InterPro" id="IPR037509">
    <property type="entry name" value="ThiC"/>
</dbReference>
<dbReference type="InterPro" id="IPR038521">
    <property type="entry name" value="ThiC/Bza_core_dom"/>
</dbReference>
<dbReference type="InterPro" id="IPR002817">
    <property type="entry name" value="ThiC/BzaA/B"/>
</dbReference>
<dbReference type="NCBIfam" id="NF006763">
    <property type="entry name" value="PRK09284.1"/>
    <property type="match status" value="1"/>
</dbReference>
<dbReference type="NCBIfam" id="NF009895">
    <property type="entry name" value="PRK13352.1"/>
    <property type="match status" value="1"/>
</dbReference>
<dbReference type="NCBIfam" id="TIGR00190">
    <property type="entry name" value="thiC"/>
    <property type="match status" value="1"/>
</dbReference>
<dbReference type="PANTHER" id="PTHR30557:SF1">
    <property type="entry name" value="PHOSPHOMETHYLPYRIMIDINE SYNTHASE, CHLOROPLASTIC"/>
    <property type="match status" value="1"/>
</dbReference>
<dbReference type="PANTHER" id="PTHR30557">
    <property type="entry name" value="THIAMINE BIOSYNTHESIS PROTEIN THIC"/>
    <property type="match status" value="1"/>
</dbReference>
<dbReference type="Pfam" id="PF01964">
    <property type="entry name" value="ThiC_Rad_SAM"/>
    <property type="match status" value="1"/>
</dbReference>
<dbReference type="SFLD" id="SFLDF00407">
    <property type="entry name" value="phosphomethylpyrimidine_syntha"/>
    <property type="match status" value="1"/>
</dbReference>
<dbReference type="SFLD" id="SFLDG01114">
    <property type="entry name" value="phosphomethylpyrimidine_syntha"/>
    <property type="match status" value="1"/>
</dbReference>
<dbReference type="SFLD" id="SFLDS00113">
    <property type="entry name" value="Radical_SAM_Phosphomethylpyrim"/>
    <property type="match status" value="1"/>
</dbReference>
<name>THIC_CAMFF</name>
<protein>
    <recommendedName>
        <fullName evidence="1">Phosphomethylpyrimidine synthase</fullName>
        <ecNumber evidence="1">4.1.99.17</ecNumber>
    </recommendedName>
    <alternativeName>
        <fullName evidence="1">Hydroxymethylpyrimidine phosphate synthase</fullName>
        <shortName evidence="1">HMP-P synthase</shortName>
        <shortName evidence="1">HMP-phosphate synthase</shortName>
        <shortName evidence="1">HMPP synthase</shortName>
    </alternativeName>
    <alternativeName>
        <fullName evidence="1">Thiamine biosynthesis protein ThiC</fullName>
    </alternativeName>
</protein>
<comment type="function">
    <text evidence="1">Catalyzes the synthesis of the hydroxymethylpyrimidine phosphate (HMP-P) moiety of thiamine from aminoimidazole ribotide (AIR) in a radical S-adenosyl-L-methionine (SAM)-dependent reaction.</text>
</comment>
<comment type="catalytic activity">
    <reaction evidence="1">
        <text>5-amino-1-(5-phospho-beta-D-ribosyl)imidazole + S-adenosyl-L-methionine = 4-amino-2-methyl-5-(phosphooxymethyl)pyrimidine + CO + 5'-deoxyadenosine + formate + L-methionine + 3 H(+)</text>
        <dbReference type="Rhea" id="RHEA:24840"/>
        <dbReference type="ChEBI" id="CHEBI:15378"/>
        <dbReference type="ChEBI" id="CHEBI:15740"/>
        <dbReference type="ChEBI" id="CHEBI:17245"/>
        <dbReference type="ChEBI" id="CHEBI:17319"/>
        <dbReference type="ChEBI" id="CHEBI:57844"/>
        <dbReference type="ChEBI" id="CHEBI:58354"/>
        <dbReference type="ChEBI" id="CHEBI:59789"/>
        <dbReference type="ChEBI" id="CHEBI:137981"/>
        <dbReference type="EC" id="4.1.99.17"/>
    </reaction>
</comment>
<comment type="cofactor">
    <cofactor evidence="1">
        <name>[4Fe-4S] cluster</name>
        <dbReference type="ChEBI" id="CHEBI:49883"/>
    </cofactor>
    <text evidence="1">Binds 1 [4Fe-4S] cluster per subunit. The cluster is coordinated with 3 cysteines and an exchangeable S-adenosyl-L-methionine.</text>
</comment>
<comment type="pathway">
    <text evidence="1">Cofactor biosynthesis; thiamine diphosphate biosynthesis.</text>
</comment>
<comment type="subunit">
    <text evidence="1">Homodimer.</text>
</comment>
<comment type="similarity">
    <text evidence="1">Belongs to the ThiC family.</text>
</comment>
<proteinExistence type="inferred from homology"/>
<keyword id="KW-0004">4Fe-4S</keyword>
<keyword id="KW-0408">Iron</keyword>
<keyword id="KW-0411">Iron-sulfur</keyword>
<keyword id="KW-0456">Lyase</keyword>
<keyword id="KW-0479">Metal-binding</keyword>
<keyword id="KW-0949">S-adenosyl-L-methionine</keyword>
<keyword id="KW-0784">Thiamine biosynthesis</keyword>
<keyword id="KW-0862">Zinc</keyword>
<sequence>MRKDWCEARKNDPTPTQMYYAKNGVITPEMEYVAKVEMLKPEYIRQLVAEGKLIIPANINHTNQIPMAIGRAVKCKINANIGSSALASDINEEIEKLKVCLKYGADTVMDLSTGGDLDEIRRAIIANSTVPIGTVPIYQIIHDIKDLDNLTPQIMLECIEKQAKQGVSYFTIHAGFLLKFMPLVAKRKMGIVSRGGSLMASWMMKHHKENPFYEAFDEICDICAKYDASLSLGDSLRPGCLHDASDEAQMSELAVLGELTKRAWEKNVQVMVEGPGHVPFNQIEFNMKEEKRLCHDAPFYILGPLPTDIGAGYDHITSAIGGTMAAFHGASMLCYVTPKEHLGLPNAKDVRDGIISHKIAAHAADIALGRVGAIERDHAMSDARYKFDWNKQFELALDPDKARELHDESLPQDVFKEAEFCSMCGPKFCAYKISQEIAKIECSDYPKEKK</sequence>
<reference key="1">
    <citation type="submission" date="2006-11" db="EMBL/GenBank/DDBJ databases">
        <title>Sequence of Campylobacter fetus subsp. fetus 82-40.</title>
        <authorList>
            <person name="Fouts D.E."/>
            <person name="Nelson K.E."/>
        </authorList>
    </citation>
    <scope>NUCLEOTIDE SEQUENCE [LARGE SCALE GENOMIC DNA]</scope>
    <source>
        <strain>82-40</strain>
    </source>
</reference>
<accession>A0RN29</accession>
<feature type="chain" id="PRO_1000004748" description="Phosphomethylpyrimidine synthase">
    <location>
        <begin position="1"/>
        <end position="450"/>
    </location>
</feature>
<feature type="binding site" evidence="1">
    <location>
        <position position="80"/>
    </location>
    <ligand>
        <name>substrate</name>
    </ligand>
</feature>
<feature type="binding site" evidence="1">
    <location>
        <position position="109"/>
    </location>
    <ligand>
        <name>substrate</name>
    </ligand>
</feature>
<feature type="binding site" evidence="1">
    <location>
        <position position="138"/>
    </location>
    <ligand>
        <name>substrate</name>
    </ligand>
</feature>
<feature type="binding site" evidence="1">
    <location>
        <position position="173"/>
    </location>
    <ligand>
        <name>substrate</name>
    </ligand>
</feature>
<feature type="binding site" evidence="1">
    <location>
        <begin position="193"/>
        <end position="195"/>
    </location>
    <ligand>
        <name>substrate</name>
    </ligand>
</feature>
<feature type="binding site" evidence="1">
    <location>
        <begin position="234"/>
        <end position="237"/>
    </location>
    <ligand>
        <name>substrate</name>
    </ligand>
</feature>
<feature type="binding site" evidence="1">
    <location>
        <position position="273"/>
    </location>
    <ligand>
        <name>substrate</name>
    </ligand>
</feature>
<feature type="binding site" evidence="1">
    <location>
        <position position="277"/>
    </location>
    <ligand>
        <name>Zn(2+)</name>
        <dbReference type="ChEBI" id="CHEBI:29105"/>
    </ligand>
</feature>
<feature type="binding site" evidence="1">
    <location>
        <position position="300"/>
    </location>
    <ligand>
        <name>substrate</name>
    </ligand>
</feature>
<feature type="binding site" evidence="1">
    <location>
        <position position="341"/>
    </location>
    <ligand>
        <name>Zn(2+)</name>
        <dbReference type="ChEBI" id="CHEBI:29105"/>
    </ligand>
</feature>
<feature type="binding site" evidence="1">
    <location>
        <position position="421"/>
    </location>
    <ligand>
        <name>[4Fe-4S] cluster</name>
        <dbReference type="ChEBI" id="CHEBI:49883"/>
        <note>4Fe-4S-S-AdoMet</note>
    </ligand>
</feature>
<feature type="binding site" evidence="1">
    <location>
        <position position="424"/>
    </location>
    <ligand>
        <name>[4Fe-4S] cluster</name>
        <dbReference type="ChEBI" id="CHEBI:49883"/>
        <note>4Fe-4S-S-AdoMet</note>
    </ligand>
</feature>
<feature type="binding site" evidence="1">
    <location>
        <position position="429"/>
    </location>
    <ligand>
        <name>[4Fe-4S] cluster</name>
        <dbReference type="ChEBI" id="CHEBI:49883"/>
        <note>4Fe-4S-S-AdoMet</note>
    </ligand>
</feature>
<evidence type="ECO:0000255" key="1">
    <source>
        <dbReference type="HAMAP-Rule" id="MF_00089"/>
    </source>
</evidence>
<gene>
    <name evidence="1" type="primary">thiC</name>
    <name type="ordered locus">CFF8240_0410</name>
</gene>